<accession>Q9BXY8</accession>
<accession>B2R574</accession>
<accession>D3DXA2</accession>
<accession>F5H7H5</accession>
<accession>Q5JVV9</accession>
<proteinExistence type="evidence at protein level"/>
<reference key="1">
    <citation type="journal article" date="2005" name="Gene">
        <title>Characterization of the Bex gene family in humans, mice, and rats.</title>
        <authorList>
            <person name="Alvarez E."/>
            <person name="Zhou W."/>
            <person name="Witta S.E."/>
            <person name="Freed C.R."/>
        </authorList>
    </citation>
    <scope>NUCLEOTIDE SEQUENCE [MRNA]</scope>
    <scope>TISSUE SPECIFICITY</scope>
</reference>
<reference key="2">
    <citation type="submission" date="2000-03" db="EMBL/GenBank/DDBJ databases">
        <authorList>
            <person name="Mao Y."/>
            <person name="Xie Y."/>
            <person name="Zhou Z."/>
            <person name="Zhao W."/>
            <person name="Zhao S."/>
            <person name="Wang W."/>
            <person name="Huang Y."/>
            <person name="Wang S."/>
            <person name="Tang R."/>
            <person name="Chen X."/>
            <person name="Wu C."/>
        </authorList>
    </citation>
    <scope>NUCLEOTIDE SEQUENCE [MRNA]</scope>
</reference>
<reference key="3">
    <citation type="journal article" date="2004" name="Nat. Genet.">
        <title>Complete sequencing and characterization of 21,243 full-length human cDNAs.</title>
        <authorList>
            <person name="Ota T."/>
            <person name="Suzuki Y."/>
            <person name="Nishikawa T."/>
            <person name="Otsuki T."/>
            <person name="Sugiyama T."/>
            <person name="Irie R."/>
            <person name="Wakamatsu A."/>
            <person name="Hayashi K."/>
            <person name="Sato H."/>
            <person name="Nagai K."/>
            <person name="Kimura K."/>
            <person name="Makita H."/>
            <person name="Sekine M."/>
            <person name="Obayashi M."/>
            <person name="Nishi T."/>
            <person name="Shibahara T."/>
            <person name="Tanaka T."/>
            <person name="Ishii S."/>
            <person name="Yamamoto J."/>
            <person name="Saito K."/>
            <person name="Kawai Y."/>
            <person name="Isono Y."/>
            <person name="Nakamura Y."/>
            <person name="Nagahari K."/>
            <person name="Murakami K."/>
            <person name="Yasuda T."/>
            <person name="Iwayanagi T."/>
            <person name="Wagatsuma M."/>
            <person name="Shiratori A."/>
            <person name="Sudo H."/>
            <person name="Hosoiri T."/>
            <person name="Kaku Y."/>
            <person name="Kodaira H."/>
            <person name="Kondo H."/>
            <person name="Sugawara M."/>
            <person name="Takahashi M."/>
            <person name="Kanda K."/>
            <person name="Yokoi T."/>
            <person name="Furuya T."/>
            <person name="Kikkawa E."/>
            <person name="Omura Y."/>
            <person name="Abe K."/>
            <person name="Kamihara K."/>
            <person name="Katsuta N."/>
            <person name="Sato K."/>
            <person name="Tanikawa M."/>
            <person name="Yamazaki M."/>
            <person name="Ninomiya K."/>
            <person name="Ishibashi T."/>
            <person name="Yamashita H."/>
            <person name="Murakawa K."/>
            <person name="Fujimori K."/>
            <person name="Tanai H."/>
            <person name="Kimata M."/>
            <person name="Watanabe M."/>
            <person name="Hiraoka S."/>
            <person name="Chiba Y."/>
            <person name="Ishida S."/>
            <person name="Ono Y."/>
            <person name="Takiguchi S."/>
            <person name="Watanabe S."/>
            <person name="Yosida M."/>
            <person name="Hotuta T."/>
            <person name="Kusano J."/>
            <person name="Kanehori K."/>
            <person name="Takahashi-Fujii A."/>
            <person name="Hara H."/>
            <person name="Tanase T.-O."/>
            <person name="Nomura Y."/>
            <person name="Togiya S."/>
            <person name="Komai F."/>
            <person name="Hara R."/>
            <person name="Takeuchi K."/>
            <person name="Arita M."/>
            <person name="Imose N."/>
            <person name="Musashino K."/>
            <person name="Yuuki H."/>
            <person name="Oshima A."/>
            <person name="Sasaki N."/>
            <person name="Aotsuka S."/>
            <person name="Yoshikawa Y."/>
            <person name="Matsunawa H."/>
            <person name="Ichihara T."/>
            <person name="Shiohata N."/>
            <person name="Sano S."/>
            <person name="Moriya S."/>
            <person name="Momiyama H."/>
            <person name="Satoh N."/>
            <person name="Takami S."/>
            <person name="Terashima Y."/>
            <person name="Suzuki O."/>
            <person name="Nakagawa S."/>
            <person name="Senoh A."/>
            <person name="Mizoguchi H."/>
            <person name="Goto Y."/>
            <person name="Shimizu F."/>
            <person name="Wakebe H."/>
            <person name="Hishigaki H."/>
            <person name="Watanabe T."/>
            <person name="Sugiyama A."/>
            <person name="Takemoto M."/>
            <person name="Kawakami B."/>
            <person name="Yamazaki M."/>
            <person name="Watanabe K."/>
            <person name="Kumagai A."/>
            <person name="Itakura S."/>
            <person name="Fukuzumi Y."/>
            <person name="Fujimori Y."/>
            <person name="Komiyama M."/>
            <person name="Tashiro H."/>
            <person name="Tanigami A."/>
            <person name="Fujiwara T."/>
            <person name="Ono T."/>
            <person name="Yamada K."/>
            <person name="Fujii Y."/>
            <person name="Ozaki K."/>
            <person name="Hirao M."/>
            <person name="Ohmori Y."/>
            <person name="Kawabata A."/>
            <person name="Hikiji T."/>
            <person name="Kobatake N."/>
            <person name="Inagaki H."/>
            <person name="Ikema Y."/>
            <person name="Okamoto S."/>
            <person name="Okitani R."/>
            <person name="Kawakami T."/>
            <person name="Noguchi S."/>
            <person name="Itoh T."/>
            <person name="Shigeta K."/>
            <person name="Senba T."/>
            <person name="Matsumura K."/>
            <person name="Nakajima Y."/>
            <person name="Mizuno T."/>
            <person name="Morinaga M."/>
            <person name="Sasaki M."/>
            <person name="Togashi T."/>
            <person name="Oyama M."/>
            <person name="Hata H."/>
            <person name="Watanabe M."/>
            <person name="Komatsu T."/>
            <person name="Mizushima-Sugano J."/>
            <person name="Satoh T."/>
            <person name="Shirai Y."/>
            <person name="Takahashi Y."/>
            <person name="Nakagawa K."/>
            <person name="Okumura K."/>
            <person name="Nagase T."/>
            <person name="Nomura N."/>
            <person name="Kikuchi H."/>
            <person name="Masuho Y."/>
            <person name="Yamashita R."/>
            <person name="Nakai K."/>
            <person name="Yada T."/>
            <person name="Nakamura Y."/>
            <person name="Ohara O."/>
            <person name="Isogai T."/>
            <person name="Sugano S."/>
        </authorList>
    </citation>
    <scope>NUCLEOTIDE SEQUENCE [LARGE SCALE MRNA]</scope>
    <source>
        <tissue>Thymus</tissue>
    </source>
</reference>
<reference key="4">
    <citation type="journal article" date="2005" name="Nature">
        <title>The DNA sequence of the human X chromosome.</title>
        <authorList>
            <person name="Ross M.T."/>
            <person name="Grafham D.V."/>
            <person name="Coffey A.J."/>
            <person name="Scherer S."/>
            <person name="McLay K."/>
            <person name="Muzny D."/>
            <person name="Platzer M."/>
            <person name="Howell G.R."/>
            <person name="Burrows C."/>
            <person name="Bird C.P."/>
            <person name="Frankish A."/>
            <person name="Lovell F.L."/>
            <person name="Howe K.L."/>
            <person name="Ashurst J.L."/>
            <person name="Fulton R.S."/>
            <person name="Sudbrak R."/>
            <person name="Wen G."/>
            <person name="Jones M.C."/>
            <person name="Hurles M.E."/>
            <person name="Andrews T.D."/>
            <person name="Scott C.E."/>
            <person name="Searle S."/>
            <person name="Ramser J."/>
            <person name="Whittaker A."/>
            <person name="Deadman R."/>
            <person name="Carter N.P."/>
            <person name="Hunt S.E."/>
            <person name="Chen R."/>
            <person name="Cree A."/>
            <person name="Gunaratne P."/>
            <person name="Havlak P."/>
            <person name="Hodgson A."/>
            <person name="Metzker M.L."/>
            <person name="Richards S."/>
            <person name="Scott G."/>
            <person name="Steffen D."/>
            <person name="Sodergren E."/>
            <person name="Wheeler D.A."/>
            <person name="Worley K.C."/>
            <person name="Ainscough R."/>
            <person name="Ambrose K.D."/>
            <person name="Ansari-Lari M.A."/>
            <person name="Aradhya S."/>
            <person name="Ashwell R.I."/>
            <person name="Babbage A.K."/>
            <person name="Bagguley C.L."/>
            <person name="Ballabio A."/>
            <person name="Banerjee R."/>
            <person name="Barker G.E."/>
            <person name="Barlow K.F."/>
            <person name="Barrett I.P."/>
            <person name="Bates K.N."/>
            <person name="Beare D.M."/>
            <person name="Beasley H."/>
            <person name="Beasley O."/>
            <person name="Beck A."/>
            <person name="Bethel G."/>
            <person name="Blechschmidt K."/>
            <person name="Brady N."/>
            <person name="Bray-Allen S."/>
            <person name="Bridgeman A.M."/>
            <person name="Brown A.J."/>
            <person name="Brown M.J."/>
            <person name="Bonnin D."/>
            <person name="Bruford E.A."/>
            <person name="Buhay C."/>
            <person name="Burch P."/>
            <person name="Burford D."/>
            <person name="Burgess J."/>
            <person name="Burrill W."/>
            <person name="Burton J."/>
            <person name="Bye J.M."/>
            <person name="Carder C."/>
            <person name="Carrel L."/>
            <person name="Chako J."/>
            <person name="Chapman J.C."/>
            <person name="Chavez D."/>
            <person name="Chen E."/>
            <person name="Chen G."/>
            <person name="Chen Y."/>
            <person name="Chen Z."/>
            <person name="Chinault C."/>
            <person name="Ciccodicola A."/>
            <person name="Clark S.Y."/>
            <person name="Clarke G."/>
            <person name="Clee C.M."/>
            <person name="Clegg S."/>
            <person name="Clerc-Blankenburg K."/>
            <person name="Clifford K."/>
            <person name="Cobley V."/>
            <person name="Cole C.G."/>
            <person name="Conquer J.S."/>
            <person name="Corby N."/>
            <person name="Connor R.E."/>
            <person name="David R."/>
            <person name="Davies J."/>
            <person name="Davis C."/>
            <person name="Davis J."/>
            <person name="Delgado O."/>
            <person name="Deshazo D."/>
            <person name="Dhami P."/>
            <person name="Ding Y."/>
            <person name="Dinh H."/>
            <person name="Dodsworth S."/>
            <person name="Draper H."/>
            <person name="Dugan-Rocha S."/>
            <person name="Dunham A."/>
            <person name="Dunn M."/>
            <person name="Durbin K.J."/>
            <person name="Dutta I."/>
            <person name="Eades T."/>
            <person name="Ellwood M."/>
            <person name="Emery-Cohen A."/>
            <person name="Errington H."/>
            <person name="Evans K.L."/>
            <person name="Faulkner L."/>
            <person name="Francis F."/>
            <person name="Frankland J."/>
            <person name="Fraser A.E."/>
            <person name="Galgoczy P."/>
            <person name="Gilbert J."/>
            <person name="Gill R."/>
            <person name="Gloeckner G."/>
            <person name="Gregory S.G."/>
            <person name="Gribble S."/>
            <person name="Griffiths C."/>
            <person name="Grocock R."/>
            <person name="Gu Y."/>
            <person name="Gwilliam R."/>
            <person name="Hamilton C."/>
            <person name="Hart E.A."/>
            <person name="Hawes A."/>
            <person name="Heath P.D."/>
            <person name="Heitmann K."/>
            <person name="Hennig S."/>
            <person name="Hernandez J."/>
            <person name="Hinzmann B."/>
            <person name="Ho S."/>
            <person name="Hoffs M."/>
            <person name="Howden P.J."/>
            <person name="Huckle E.J."/>
            <person name="Hume J."/>
            <person name="Hunt P.J."/>
            <person name="Hunt A.R."/>
            <person name="Isherwood J."/>
            <person name="Jacob L."/>
            <person name="Johnson D."/>
            <person name="Jones S."/>
            <person name="de Jong P.J."/>
            <person name="Joseph S.S."/>
            <person name="Keenan S."/>
            <person name="Kelly S."/>
            <person name="Kershaw J.K."/>
            <person name="Khan Z."/>
            <person name="Kioschis P."/>
            <person name="Klages S."/>
            <person name="Knights A.J."/>
            <person name="Kosiura A."/>
            <person name="Kovar-Smith C."/>
            <person name="Laird G.K."/>
            <person name="Langford C."/>
            <person name="Lawlor S."/>
            <person name="Leversha M."/>
            <person name="Lewis L."/>
            <person name="Liu W."/>
            <person name="Lloyd C."/>
            <person name="Lloyd D.M."/>
            <person name="Loulseged H."/>
            <person name="Loveland J.E."/>
            <person name="Lovell J.D."/>
            <person name="Lozado R."/>
            <person name="Lu J."/>
            <person name="Lyne R."/>
            <person name="Ma J."/>
            <person name="Maheshwari M."/>
            <person name="Matthews L.H."/>
            <person name="McDowall J."/>
            <person name="McLaren S."/>
            <person name="McMurray A."/>
            <person name="Meidl P."/>
            <person name="Meitinger T."/>
            <person name="Milne S."/>
            <person name="Miner G."/>
            <person name="Mistry S.L."/>
            <person name="Morgan M."/>
            <person name="Morris S."/>
            <person name="Mueller I."/>
            <person name="Mullikin J.C."/>
            <person name="Nguyen N."/>
            <person name="Nordsiek G."/>
            <person name="Nyakatura G."/>
            <person name="O'dell C.N."/>
            <person name="Okwuonu G."/>
            <person name="Palmer S."/>
            <person name="Pandian R."/>
            <person name="Parker D."/>
            <person name="Parrish J."/>
            <person name="Pasternak S."/>
            <person name="Patel D."/>
            <person name="Pearce A.V."/>
            <person name="Pearson D.M."/>
            <person name="Pelan S.E."/>
            <person name="Perez L."/>
            <person name="Porter K.M."/>
            <person name="Ramsey Y."/>
            <person name="Reichwald K."/>
            <person name="Rhodes S."/>
            <person name="Ridler K.A."/>
            <person name="Schlessinger D."/>
            <person name="Schueler M.G."/>
            <person name="Sehra H.K."/>
            <person name="Shaw-Smith C."/>
            <person name="Shen H."/>
            <person name="Sheridan E.M."/>
            <person name="Shownkeen R."/>
            <person name="Skuce C.D."/>
            <person name="Smith M.L."/>
            <person name="Sotheran E.C."/>
            <person name="Steingruber H.E."/>
            <person name="Steward C.A."/>
            <person name="Storey R."/>
            <person name="Swann R.M."/>
            <person name="Swarbreck D."/>
            <person name="Tabor P.E."/>
            <person name="Taudien S."/>
            <person name="Taylor T."/>
            <person name="Teague B."/>
            <person name="Thomas K."/>
            <person name="Thorpe A."/>
            <person name="Timms K."/>
            <person name="Tracey A."/>
            <person name="Trevanion S."/>
            <person name="Tromans A.C."/>
            <person name="d'Urso M."/>
            <person name="Verduzco D."/>
            <person name="Villasana D."/>
            <person name="Waldron L."/>
            <person name="Wall M."/>
            <person name="Wang Q."/>
            <person name="Warren J."/>
            <person name="Warry G.L."/>
            <person name="Wei X."/>
            <person name="West A."/>
            <person name="Whitehead S.L."/>
            <person name="Whiteley M.N."/>
            <person name="Wilkinson J.E."/>
            <person name="Willey D.L."/>
            <person name="Williams G."/>
            <person name="Williams L."/>
            <person name="Williamson A."/>
            <person name="Williamson H."/>
            <person name="Wilming L."/>
            <person name="Woodmansey R.L."/>
            <person name="Wray P.W."/>
            <person name="Yen J."/>
            <person name="Zhang J."/>
            <person name="Zhou J."/>
            <person name="Zoghbi H."/>
            <person name="Zorilla S."/>
            <person name="Buck D."/>
            <person name="Reinhardt R."/>
            <person name="Poustka A."/>
            <person name="Rosenthal A."/>
            <person name="Lehrach H."/>
            <person name="Meindl A."/>
            <person name="Minx P.J."/>
            <person name="Hillier L.W."/>
            <person name="Willard H.F."/>
            <person name="Wilson R.K."/>
            <person name="Waterston R.H."/>
            <person name="Rice C.M."/>
            <person name="Vaudin M."/>
            <person name="Coulson A."/>
            <person name="Nelson D.L."/>
            <person name="Weinstock G."/>
            <person name="Sulston J.E."/>
            <person name="Durbin R.M."/>
            <person name="Hubbard T."/>
            <person name="Gibbs R.A."/>
            <person name="Beck S."/>
            <person name="Rogers J."/>
            <person name="Bentley D.R."/>
        </authorList>
    </citation>
    <scope>NUCLEOTIDE SEQUENCE [LARGE SCALE GENOMIC DNA]</scope>
</reference>
<reference key="5">
    <citation type="submission" date="2005-09" db="EMBL/GenBank/DDBJ databases">
        <authorList>
            <person name="Mural R.J."/>
            <person name="Istrail S."/>
            <person name="Sutton G.G."/>
            <person name="Florea L."/>
            <person name="Halpern A.L."/>
            <person name="Mobarry C.M."/>
            <person name="Lippert R."/>
            <person name="Walenz B."/>
            <person name="Shatkay H."/>
            <person name="Dew I."/>
            <person name="Miller J.R."/>
            <person name="Flanigan M.J."/>
            <person name="Edwards N.J."/>
            <person name="Bolanos R."/>
            <person name="Fasulo D."/>
            <person name="Halldorsson B.V."/>
            <person name="Hannenhalli S."/>
            <person name="Turner R."/>
            <person name="Yooseph S."/>
            <person name="Lu F."/>
            <person name="Nusskern D.R."/>
            <person name="Shue B.C."/>
            <person name="Zheng X.H."/>
            <person name="Zhong F."/>
            <person name="Delcher A.L."/>
            <person name="Huson D.H."/>
            <person name="Kravitz S.A."/>
            <person name="Mouchard L."/>
            <person name="Reinert K."/>
            <person name="Remington K.A."/>
            <person name="Clark A.G."/>
            <person name="Waterman M.S."/>
            <person name="Eichler E.E."/>
            <person name="Adams M.D."/>
            <person name="Hunkapiller M.W."/>
            <person name="Myers E.W."/>
            <person name="Venter J.C."/>
        </authorList>
    </citation>
    <scope>NUCLEOTIDE SEQUENCE [LARGE SCALE GENOMIC DNA]</scope>
</reference>
<reference key="6">
    <citation type="journal article" date="2004" name="Genome Res.">
        <title>The status, quality, and expansion of the NIH full-length cDNA project: the Mammalian Gene Collection (MGC).</title>
        <authorList>
            <consortium name="The MGC Project Team"/>
        </authorList>
    </citation>
    <scope>NUCLEOTIDE SEQUENCE [LARGE SCALE MRNA]</scope>
    <source>
        <tissue>Uterus</tissue>
    </source>
</reference>
<reference key="7">
    <citation type="journal article" date="2005" name="Nucleic Acids Res.">
        <title>Human Bex2 interacts with LMO2 and regulates the transcriptional activity of a novel DNA-binding complex.</title>
        <authorList>
            <person name="Han C."/>
            <person name="Liu H."/>
            <person name="Liu J."/>
            <person name="Yin K."/>
            <person name="Xie Y."/>
            <person name="Shen X."/>
            <person name="Wang Y."/>
            <person name="Yuan J."/>
            <person name="Qiang B."/>
            <person name="Liu Y.-J."/>
            <person name="Peng X."/>
        </authorList>
    </citation>
    <scope>SUBCELLULAR LOCATION</scope>
    <scope>INTERACTION WITH LMO2</scope>
</reference>
<reference key="8">
    <citation type="journal article" date="2010" name="Int. J. Cancer">
        <title>BEX2 regulates mitochondrial apoptosis and G1 cell cycle in breast cancer.</title>
        <authorList>
            <person name="Naderi A."/>
            <person name="Liu J."/>
            <person name="Bennett I.C."/>
        </authorList>
    </citation>
    <scope>FUNCTION</scope>
    <scope>TISSUE SPECIFICITY</scope>
</reference>
<comment type="function">
    <text evidence="2 7">Regulator of mitochondrial apoptosis and G1 cell cycle in breast cancer (PubMed:19711341). Protects the breast cancer cells against mitochondrial apoptosis and this effect is mediated through the modulation of BCL2 protein family, which involves the positive regulation of anti-apoptotic member BCL2 and the negative regulation of pro-apoptotic members BAD, BAK1 and PUMA (PubMed:19711341). Required for the normal cell cycle progression during G1 in breast cancer cells through the regulation of CCND1 and CDKN1A (PubMed:19711341). Regulates the level of PP2A regulatory subunit B and PP2A phosphatase activity (PubMed:19711341). In absence of reductive stress, acts as a pseudosubstrate for the CRL2(FEM1B) complex: associates with FEM1B via zinc, thereby preventing association between FEM1B and its substrates (By similarity).</text>
</comment>
<comment type="subunit">
    <text evidence="2 6">Interacts with LMO2, possibly leading to regulate the transcriptional activity of a DNA-binding complex containing LMO2 (PubMed:16314316). Interacts with OMP (By similarity).</text>
</comment>
<comment type="interaction">
    <interactant intactId="EBI-745073">
        <id>Q9BXY8</id>
    </interactant>
    <interactant intactId="EBI-11745576">
        <id>Q6PJH3</id>
        <label>AKAP9</label>
    </interactant>
    <organismsDiffer>false</organismsDiffer>
    <experiments>3</experiments>
</comment>
<comment type="interaction">
    <interactant intactId="EBI-745073">
        <id>Q9BXY8</id>
    </interactant>
    <interactant intactId="EBI-2548012">
        <id>Q9H2G9</id>
        <label>BLZF1</label>
    </interactant>
    <organismsDiffer>false</organismsDiffer>
    <experiments>6</experiments>
</comment>
<comment type="interaction">
    <interactant intactId="EBI-745073">
        <id>Q9BXY8</id>
    </interactant>
    <interactant intactId="EBI-10193358">
        <id>Q96GS4</id>
        <label>BORCS6</label>
    </interactant>
    <organismsDiffer>false</organismsDiffer>
    <experiments>3</experiments>
</comment>
<comment type="interaction">
    <interactant intactId="EBI-745073">
        <id>Q9BXY8</id>
    </interactant>
    <interactant intactId="EBI-739580">
        <id>Q13137</id>
        <label>CALCOCO2</label>
    </interactant>
    <organismsDiffer>false</organismsDiffer>
    <experiments>3</experiments>
</comment>
<comment type="interaction">
    <interactant intactId="EBI-745073">
        <id>Q9BXY8</id>
    </interactant>
    <interactant intactId="EBI-750686">
        <id>Q8NCU1</id>
        <label>CCDC197</label>
    </interactant>
    <organismsDiffer>false</organismsDiffer>
    <experiments>3</experiments>
</comment>
<comment type="interaction">
    <interactant intactId="EBI-745073">
        <id>Q9BXY8</id>
    </interactant>
    <interactant intactId="EBI-10961624">
        <id>Q2TAC2-2</id>
        <label>CCDC57</label>
    </interactant>
    <organismsDiffer>false</organismsDiffer>
    <experiments>3</experiments>
</comment>
<comment type="interaction">
    <interactant intactId="EBI-745073">
        <id>Q9BXY8</id>
    </interactant>
    <interactant intactId="EBI-347573">
        <id>A6NC98</id>
        <label>CCDC88B</label>
    </interactant>
    <organismsDiffer>false</organismsDiffer>
    <experiments>3</experiments>
</comment>
<comment type="interaction">
    <interactant intactId="EBI-745073">
        <id>Q9BXY8</id>
    </interactant>
    <interactant intactId="EBI-1181367">
        <id>Q01850</id>
        <label>CDR2</label>
    </interactant>
    <organismsDiffer>false</organismsDiffer>
    <experiments>3</experiments>
</comment>
<comment type="interaction">
    <interactant intactId="EBI-745073">
        <id>Q9BXY8</id>
    </interactant>
    <interactant intactId="EBI-739624">
        <id>Q8NHQ1</id>
        <label>CEP70</label>
    </interactant>
    <organismsDiffer>false</organismsDiffer>
    <experiments>6</experiments>
</comment>
<comment type="interaction">
    <interactant intactId="EBI-745073">
        <id>Q9BXY8</id>
    </interactant>
    <interactant intactId="EBI-368382">
        <id>Q9H9E3</id>
        <label>COG4</label>
    </interactant>
    <organismsDiffer>false</organismsDiffer>
    <experiments>3</experiments>
</comment>
<comment type="interaction">
    <interactant intactId="EBI-745073">
        <id>Q9BXY8</id>
    </interactant>
    <interactant intactId="EBI-1188472">
        <id>P78358</id>
        <label>CTAG1B</label>
    </interactant>
    <organismsDiffer>false</organismsDiffer>
    <experiments>5</experiments>
</comment>
<comment type="interaction">
    <interactant intactId="EBI-745073">
        <id>Q9BXY8</id>
    </interactant>
    <interactant intactId="EBI-3867333">
        <id>A8MQ03</id>
        <label>CYSRT1</label>
    </interactant>
    <organismsDiffer>false</organismsDiffer>
    <experiments>3</experiments>
</comment>
<comment type="interaction">
    <interactant intactId="EBI-745073">
        <id>Q9BXY8</id>
    </interactant>
    <interactant intactId="EBI-356015">
        <id>Q14204</id>
        <label>DYNC1H1</label>
    </interactant>
    <organismsDiffer>false</organismsDiffer>
    <experiments>3</experiments>
</comment>
<comment type="interaction">
    <interactant intactId="EBI-745073">
        <id>Q9BXY8</id>
    </interactant>
    <interactant intactId="EBI-742102">
        <id>Q8IYI6</id>
        <label>EXOC8</label>
    </interactant>
    <organismsDiffer>false</organismsDiffer>
    <experiments>3</experiments>
</comment>
<comment type="interaction">
    <interactant intactId="EBI-745073">
        <id>Q9BXY8</id>
    </interactant>
    <interactant intactId="EBI-5661036">
        <id>A1L4K1</id>
        <label>FSD2</label>
    </interactant>
    <organismsDiffer>false</organismsDiffer>
    <experiments>3</experiments>
</comment>
<comment type="interaction">
    <interactant intactId="EBI-745073">
        <id>Q9BXY8</id>
    </interactant>
    <interactant intactId="EBI-1571188">
        <id>P19883</id>
        <label>FST</label>
    </interactant>
    <organismsDiffer>false</organismsDiffer>
    <experiments>3</experiments>
</comment>
<comment type="interaction">
    <interactant intactId="EBI-745073">
        <id>Q9BXY8</id>
    </interactant>
    <interactant intactId="EBI-11519926">
        <id>Q6PI77</id>
        <label>GPRASP3</label>
    </interactant>
    <organismsDiffer>false</organismsDiffer>
    <experiments>3</experiments>
</comment>
<comment type="interaction">
    <interactant intactId="EBI-745073">
        <id>Q9BXY8</id>
    </interactant>
    <interactant intactId="EBI-7116203">
        <id>O75031</id>
        <label>HSF2BP</label>
    </interactant>
    <organismsDiffer>false</organismsDiffer>
    <experiments>3</experiments>
</comment>
<comment type="interaction">
    <interactant intactId="EBI-745073">
        <id>Q9BXY8</id>
    </interactant>
    <interactant intactId="EBI-739395">
        <id>Q16082</id>
        <label>HSPB2</label>
    </interactant>
    <organismsDiffer>false</organismsDiffer>
    <experiments>3</experiments>
</comment>
<comment type="interaction">
    <interactant intactId="EBI-745073">
        <id>Q9BXY8</id>
    </interactant>
    <interactant intactId="EBI-10693436">
        <id>Q9BS75</id>
        <label>KLHL20</label>
    </interactant>
    <organismsDiffer>false</organismsDiffer>
    <experiments>3</experiments>
</comment>
<comment type="interaction">
    <interactant intactId="EBI-745073">
        <id>Q9BXY8</id>
    </interactant>
    <interactant intactId="EBI-2432309">
        <id>Q92876</id>
        <label>KLK6</label>
    </interactant>
    <organismsDiffer>false</organismsDiffer>
    <experiments>3</experiments>
</comment>
<comment type="interaction">
    <interactant intactId="EBI-745073">
        <id>Q9BXY8</id>
    </interactant>
    <interactant intactId="EBI-373334">
        <id>Q9Y448</id>
        <label>KNSTRN</label>
    </interactant>
    <organismsDiffer>false</organismsDiffer>
    <experiments>3</experiments>
</comment>
<comment type="interaction">
    <interactant intactId="EBI-745073">
        <id>Q9BXY8</id>
    </interactant>
    <interactant intactId="EBI-739566">
        <id>P19012</id>
        <label>KRT15</label>
    </interactant>
    <organismsDiffer>false</organismsDiffer>
    <experiments>3</experiments>
</comment>
<comment type="interaction">
    <interactant intactId="EBI-745073">
        <id>Q9BXY8</id>
    </interactant>
    <interactant intactId="EBI-742756">
        <id>P08727</id>
        <label>KRT19</label>
    </interactant>
    <organismsDiffer>false</organismsDiffer>
    <experiments>3</experiments>
</comment>
<comment type="interaction">
    <interactant intactId="EBI-745073">
        <id>Q9BXY8</id>
    </interactant>
    <interactant intactId="EBI-3044087">
        <id>Q7Z3Y8</id>
        <label>KRT27</label>
    </interactant>
    <organismsDiffer>false</organismsDiffer>
    <experiments>3</experiments>
</comment>
<comment type="interaction">
    <interactant intactId="EBI-745073">
        <id>Q9BXY8</id>
    </interactant>
    <interactant intactId="EBI-948001">
        <id>Q15323</id>
        <label>KRT31</label>
    </interactant>
    <organismsDiffer>false</organismsDiffer>
    <experiments>6</experiments>
</comment>
<comment type="interaction">
    <interactant intactId="EBI-745073">
        <id>Q9BXY8</id>
    </interactant>
    <interactant intactId="EBI-1047093">
        <id>O76011</id>
        <label>KRT34</label>
    </interactant>
    <organismsDiffer>false</organismsDiffer>
    <experiments>3</experiments>
</comment>
<comment type="interaction">
    <interactant intactId="EBI-745073">
        <id>Q9BXY8</id>
    </interactant>
    <interactant intactId="EBI-1047263">
        <id>O76015</id>
        <label>KRT38</label>
    </interactant>
    <organismsDiffer>false</organismsDiffer>
    <experiments>3</experiments>
</comment>
<comment type="interaction">
    <interactant intactId="EBI-745073">
        <id>Q9BXY8</id>
    </interactant>
    <interactant intactId="EBI-11958242">
        <id>Q6A163</id>
        <label>KRT39</label>
    </interactant>
    <organismsDiffer>false</organismsDiffer>
    <experiments>3</experiments>
</comment>
<comment type="interaction">
    <interactant intactId="EBI-745073">
        <id>Q9BXY8</id>
    </interactant>
    <interactant intactId="EBI-10171697">
        <id>Q6A162</id>
        <label>KRT40</label>
    </interactant>
    <organismsDiffer>false</organismsDiffer>
    <experiments>3</experiments>
</comment>
<comment type="interaction">
    <interactant intactId="EBI-745073">
        <id>Q9BXY8</id>
    </interactant>
    <interactant intactId="EBI-702198">
        <id>P02538</id>
        <label>KRT6A</label>
    </interactant>
    <organismsDiffer>false</organismsDiffer>
    <experiments>3</experiments>
</comment>
<comment type="interaction">
    <interactant intactId="EBI-745073">
        <id>Q9BXY8</id>
    </interactant>
    <interactant intactId="EBI-2949715">
        <id>O95678</id>
        <label>KRT75</label>
    </interactant>
    <organismsDiffer>false</organismsDiffer>
    <experiments>3</experiments>
</comment>
<comment type="interaction">
    <interactant intactId="EBI-745073">
        <id>Q9BXY8</id>
    </interactant>
    <interactant intactId="EBI-10171774">
        <id>P60410</id>
        <label>KRTAP10-8</label>
    </interactant>
    <organismsDiffer>false</organismsDiffer>
    <experiments>6</experiments>
</comment>
<comment type="interaction">
    <interactant intactId="EBI-745073">
        <id>Q9BXY8</id>
    </interactant>
    <interactant intactId="EBI-1052037">
        <id>Q8IUC1</id>
        <label>KRTAP11-1</label>
    </interactant>
    <organismsDiffer>false</organismsDiffer>
    <experiments>3</experiments>
</comment>
<comment type="interaction">
    <interactant intactId="EBI-745073">
        <id>Q9BXY8</id>
    </interactant>
    <interactant intactId="EBI-10176379">
        <id>P59991</id>
        <label>KRTAP12-2</label>
    </interactant>
    <organismsDiffer>false</organismsDiffer>
    <experiments>3</experiments>
</comment>
<comment type="interaction">
    <interactant intactId="EBI-745073">
        <id>Q9BXY8</id>
    </interactant>
    <interactant intactId="EBI-14065470">
        <id>Q9BYR9</id>
        <label>KRTAP2-4</label>
    </interactant>
    <organismsDiffer>false</organismsDiffer>
    <experiments>3</experiments>
</comment>
<comment type="interaction">
    <interactant intactId="EBI-745073">
        <id>Q9BXY8</id>
    </interactant>
    <interactant intactId="EBI-18395721">
        <id>Q3LI59</id>
        <label>KRTAP21-2</label>
    </interactant>
    <organismsDiffer>false</organismsDiffer>
    <experiments>3</experiments>
</comment>
<comment type="interaction">
    <interactant intactId="EBI-745073">
        <id>Q9BXY8</id>
    </interactant>
    <interactant intactId="EBI-3957694">
        <id>Q9BYR6</id>
        <label>KRTAP3-3</label>
    </interactant>
    <organismsDiffer>false</organismsDiffer>
    <experiments>3</experiments>
</comment>
<comment type="interaction">
    <interactant intactId="EBI-745073">
        <id>Q9BXY8</id>
    </interactant>
    <interactant intactId="EBI-3958099">
        <id>P26371</id>
        <label>KRTAP5-9</label>
    </interactant>
    <organismsDiffer>false</organismsDiffer>
    <experiments>3</experiments>
</comment>
<comment type="interaction">
    <interactant intactId="EBI-745073">
        <id>Q9BXY8</id>
    </interactant>
    <interactant intactId="EBI-11962084">
        <id>Q3LI66</id>
        <label>KRTAP6-2</label>
    </interactant>
    <organismsDiffer>false</organismsDiffer>
    <experiments>3</experiments>
</comment>
<comment type="interaction">
    <interactant intactId="EBI-745073">
        <id>Q9BXY8</id>
    </interactant>
    <interactant intactId="EBI-22311199">
        <id>Q3LI67</id>
        <label>KRTAP6-3</label>
    </interactant>
    <organismsDiffer>false</organismsDiffer>
    <experiments>3</experiments>
</comment>
<comment type="interaction">
    <interactant intactId="EBI-745073">
        <id>Q9BXY8</id>
    </interactant>
    <interactant intactId="EBI-11911016">
        <id>P80188</id>
        <label>LCN2</label>
    </interactant>
    <organismsDiffer>false</organismsDiffer>
    <experiments>3</experiments>
</comment>
<comment type="interaction">
    <interactant intactId="EBI-745073">
        <id>Q9BXY8</id>
    </interactant>
    <interactant intactId="EBI-740738">
        <id>O95751</id>
        <label>LDOC1</label>
    </interactant>
    <organismsDiffer>false</organismsDiffer>
    <experiments>3</experiments>
</comment>
<comment type="interaction">
    <interactant intactId="EBI-745073">
        <id>Q9BXY8</id>
    </interactant>
    <interactant intactId="EBI-741037">
        <id>Q9BRK4</id>
        <label>LZTS2</label>
    </interactant>
    <organismsDiffer>false</organismsDiffer>
    <experiments>3</experiments>
</comment>
<comment type="interaction">
    <interactant intactId="EBI-745073">
        <id>Q9BXY8</id>
    </interactant>
    <interactant intactId="EBI-10178634">
        <id>P43364-2</id>
        <label>MAGEA11</label>
    </interactant>
    <organismsDiffer>false</organismsDiffer>
    <experiments>3</experiments>
</comment>
<comment type="interaction">
    <interactant intactId="EBI-745073">
        <id>Q9BXY8</id>
    </interactant>
    <interactant intactId="EBI-5650739">
        <id>P43356</id>
        <label>MAGEA2B</label>
    </interactant>
    <organismsDiffer>false</organismsDiffer>
    <experiments>3</experiments>
</comment>
<comment type="interaction">
    <interactant intactId="EBI-745073">
        <id>Q9BXY8</id>
    </interactant>
    <interactant intactId="EBI-10194128">
        <id>Q1RN33</id>
        <label>MAGEA4</label>
    </interactant>
    <organismsDiffer>false</organismsDiffer>
    <experiments>3</experiments>
</comment>
<comment type="interaction">
    <interactant intactId="EBI-745073">
        <id>Q9BXY8</id>
    </interactant>
    <interactant intactId="EBI-724076">
        <id>Q99750</id>
        <label>MDFI</label>
    </interactant>
    <organismsDiffer>false</organismsDiffer>
    <experiments>4</experiments>
</comment>
<comment type="interaction">
    <interactant intactId="EBI-745073">
        <id>Q9BXY8</id>
    </interactant>
    <interactant intactId="EBI-2548751">
        <id>Q8TD10</id>
        <label>MIPOL1</label>
    </interactant>
    <organismsDiffer>false</organismsDiffer>
    <experiments>3</experiments>
</comment>
<comment type="interaction">
    <interactant intactId="EBI-745073">
        <id>Q9BXY8</id>
    </interactant>
    <interactant intactId="EBI-2340269">
        <id>Q13064</id>
        <label>MKRN3</label>
    </interactant>
    <organismsDiffer>false</organismsDiffer>
    <experiments>6</experiments>
</comment>
<comment type="interaction">
    <interactant intactId="EBI-745073">
        <id>Q9BXY8</id>
    </interactant>
    <interactant intactId="EBI-9675802">
        <id>Q6PF18</id>
        <label>MORN3</label>
    </interactant>
    <organismsDiffer>false</organismsDiffer>
    <experiments>3</experiments>
</comment>
<comment type="interaction">
    <interactant intactId="EBI-745073">
        <id>Q9BXY8</id>
    </interactant>
    <interactant intactId="EBI-720441">
        <id>Q96DV4</id>
        <label>MRPL38</label>
    </interactant>
    <organismsDiffer>false</organismsDiffer>
    <experiments>3</experiments>
</comment>
<comment type="interaction">
    <interactant intactId="EBI-745073">
        <id>Q9BXY8</id>
    </interactant>
    <interactant intactId="EBI-11599933">
        <id>Q4VC12</id>
        <label>MSS51</label>
    </interactant>
    <organismsDiffer>false</organismsDiffer>
    <experiments>3</experiments>
</comment>
<comment type="interaction">
    <interactant intactId="EBI-745073">
        <id>Q9BXY8</id>
    </interactant>
    <interactant intactId="EBI-11522433">
        <id>Q5JR59-3</id>
        <label>MTUS2</label>
    </interactant>
    <organismsDiffer>false</organismsDiffer>
    <experiments>3</experiments>
</comment>
<comment type="interaction">
    <interactant intactId="EBI-745073">
        <id>Q9BXY8</id>
    </interactant>
    <interactant intactId="EBI-10172876">
        <id>Q7Z6G3-2</id>
        <label>NECAB2</label>
    </interactant>
    <organismsDiffer>false</organismsDiffer>
    <experiments>3</experiments>
</comment>
<comment type="interaction">
    <interactant intactId="EBI-745073">
        <id>Q9BXY8</id>
    </interactant>
    <interactant intactId="EBI-10271199">
        <id>Q8NI38</id>
        <label>NFKBID</label>
    </interactant>
    <organismsDiffer>false</organismsDiffer>
    <experiments>3</experiments>
</comment>
<comment type="interaction">
    <interactant intactId="EBI-745073">
        <id>Q9BXY8</id>
    </interactant>
    <interactant intactId="EBI-536879">
        <id>O43482</id>
        <label>OIP5</label>
    </interactant>
    <organismsDiffer>false</organismsDiffer>
    <experiments>3</experiments>
</comment>
<comment type="interaction">
    <interactant intactId="EBI-745073">
        <id>Q9BXY8</id>
    </interactant>
    <interactant intactId="EBI-726466">
        <id>O15496</id>
        <label>PLA2G10</label>
    </interactant>
    <organismsDiffer>false</organismsDiffer>
    <experiments>3</experiments>
</comment>
<comment type="interaction">
    <interactant intactId="EBI-745073">
        <id>Q9BXY8</id>
    </interactant>
    <interactant intactId="EBI-949255">
        <id>Q58EX7</id>
        <label>PLEKHG4</label>
    </interactant>
    <organismsDiffer>false</organismsDiffer>
    <experiments>3</experiments>
</comment>
<comment type="interaction">
    <interactant intactId="EBI-745073">
        <id>Q9BXY8</id>
    </interactant>
    <interactant intactId="EBI-302345">
        <id>Q8ND90</id>
        <label>PNMA1</label>
    </interactant>
    <organismsDiffer>false</organismsDiffer>
    <experiments>3</experiments>
</comment>
<comment type="interaction">
    <interactant intactId="EBI-745073">
        <id>Q9BXY8</id>
    </interactant>
    <interactant intactId="EBI-3957793">
        <id>Q9GZV8</id>
        <label>PRDM14</label>
    </interactant>
    <organismsDiffer>false</organismsDiffer>
    <experiments>3</experiments>
</comment>
<comment type="interaction">
    <interactant intactId="EBI-745073">
        <id>Q9BXY8</id>
    </interactant>
    <interactant intactId="EBI-9033237">
        <id>Q96C74</id>
        <label>ROPN1L</label>
    </interactant>
    <organismsDiffer>false</organismsDiffer>
    <experiments>3</experiments>
</comment>
<comment type="interaction">
    <interactant intactId="EBI-745073">
        <id>Q9BXY8</id>
    </interactant>
    <interactant intactId="EBI-748621">
        <id>Q9UJW9</id>
        <label>SERTAD3</label>
    </interactant>
    <organismsDiffer>false</organismsDiffer>
    <experiments>3</experiments>
</comment>
<comment type="interaction">
    <interactant intactId="EBI-745073">
        <id>Q9BXY8</id>
    </interactant>
    <interactant intactId="EBI-5235340">
        <id>Q7Z699</id>
        <label>SPRED1</label>
    </interactant>
    <organismsDiffer>false</organismsDiffer>
    <experiments>3</experiments>
</comment>
<comment type="interaction">
    <interactant intactId="EBI-745073">
        <id>Q9BXY8</id>
    </interactant>
    <interactant intactId="EBI-12290641">
        <id>O43610</id>
        <label>SPRY3</label>
    </interactant>
    <organismsDiffer>false</organismsDiffer>
    <experiments>3</experiments>
</comment>
<comment type="interaction">
    <interactant intactId="EBI-745073">
        <id>Q9BXY8</id>
    </interactant>
    <interactant intactId="EBI-2212028">
        <id>Q9Y2D8</id>
        <label>SSX2IP</label>
    </interactant>
    <organismsDiffer>false</organismsDiffer>
    <experiments>3</experiments>
</comment>
<comment type="interaction">
    <interactant intactId="EBI-745073">
        <id>Q9BXY8</id>
    </interactant>
    <interactant intactId="EBI-6872807">
        <id>Q8N0S2</id>
        <label>SYCE1</label>
    </interactant>
    <organismsDiffer>false</organismsDiffer>
    <experiments>3</experiments>
</comment>
<comment type="interaction">
    <interactant intactId="EBI-745073">
        <id>Q9BXY8</id>
    </interactant>
    <interactant intactId="EBI-2554984">
        <id>Q9Y6A5</id>
        <label>TACC3</label>
    </interactant>
    <organismsDiffer>false</organismsDiffer>
    <experiments>3</experiments>
</comment>
<comment type="interaction">
    <interactant intactId="EBI-745073">
        <id>Q9BXY8</id>
    </interactant>
    <interactant intactId="EBI-359224">
        <id>Q13077</id>
        <label>TRAF1</label>
    </interactant>
    <organismsDiffer>false</organismsDiffer>
    <experiments>3</experiments>
</comment>
<comment type="interaction">
    <interactant intactId="EBI-745073">
        <id>Q9BXY8</id>
    </interactant>
    <interactant intactId="EBI-355744">
        <id>Q12933</id>
        <label>TRAF2</label>
    </interactant>
    <organismsDiffer>false</organismsDiffer>
    <experiments>6</experiments>
</comment>
<comment type="interaction">
    <interactant intactId="EBI-745073">
        <id>Q9BXY8</id>
    </interactant>
    <interactant intactId="EBI-719493">
        <id>P14373</id>
        <label>TRIM27</label>
    </interactant>
    <organismsDiffer>false</organismsDiffer>
    <experiments>3</experiments>
</comment>
<comment type="interaction">
    <interactant intactId="EBI-745073">
        <id>Q9BXY8</id>
    </interactant>
    <interactant intactId="EBI-5235829">
        <id>Q8IWZ5</id>
        <label>TRIM42</label>
    </interactant>
    <organismsDiffer>false</organismsDiffer>
    <experiments>3</experiments>
</comment>
<comment type="interaction">
    <interactant intactId="EBI-745073">
        <id>Q9BXY8</id>
    </interactant>
    <interactant intactId="EBI-11525489">
        <id>Q86WT6-2</id>
        <label>TRIM69</label>
    </interactant>
    <organismsDiffer>false</organismsDiffer>
    <experiments>3</experiments>
</comment>
<comment type="interaction">
    <interactant intactId="EBI-745073">
        <id>Q9BXY8</id>
    </interactant>
    <interactant intactId="EBI-10259086">
        <id>Q86UV6-2</id>
        <label>TRIM74</label>
    </interactant>
    <organismsDiffer>false</organismsDiffer>
    <experiments>3</experiments>
</comment>
<comment type="interaction">
    <interactant intactId="EBI-745073">
        <id>Q9BXY8</id>
    </interactant>
    <interactant intactId="EBI-742327">
        <id>Q15654</id>
        <label>TRIP6</label>
    </interactant>
    <organismsDiffer>false</organismsDiffer>
    <experiments>3</experiments>
</comment>
<comment type="interaction">
    <interactant intactId="EBI-745073">
        <id>Q9BXY8</id>
    </interactant>
    <interactant intactId="EBI-739895">
        <id>Q8N6Y0</id>
        <label>USHBP1</label>
    </interactant>
    <organismsDiffer>false</organismsDiffer>
    <experiments>3</experiments>
</comment>
<comment type="interaction">
    <interactant intactId="EBI-745073">
        <id>Q9BXY8</id>
    </interactant>
    <interactant intactId="EBI-12146727">
        <id>Q9UK41-2</id>
        <label>VPS28</label>
    </interactant>
    <organismsDiffer>false</organismsDiffer>
    <experiments>3</experiments>
</comment>
<comment type="interaction">
    <interactant intactId="EBI-745073">
        <id>Q9BXY8</id>
    </interactant>
    <interactant intactId="EBI-12884200">
        <id>P17023</id>
        <label>ZNF19</label>
    </interactant>
    <organismsDiffer>false</organismsDiffer>
    <experiments>3</experiments>
</comment>
<comment type="subcellular location">
    <subcellularLocation>
        <location evidence="1">Cytoplasm</location>
    </subcellularLocation>
    <subcellularLocation>
        <location evidence="6">Nucleus</location>
    </subcellularLocation>
</comment>
<comment type="alternative products">
    <event type="alternative splicing"/>
    <isoform>
        <id>Q9BXY8-1</id>
        <name>1</name>
        <sequence type="displayed"/>
    </isoform>
    <isoform>
        <id>Q9BXY8-2</id>
        <name>2</name>
        <sequence type="described" ref="VSP_046808"/>
    </isoform>
</comment>
<comment type="tissue specificity">
    <text evidence="5 7">Expressed in central nervous system, with high level in pituitary, cerebellum and temporal lobe. Widely expressed in breast cancer cell lines.</text>
</comment>
<comment type="domain">
    <text evidence="3">The histidine cluster (His cluster) and Cys-125 mediate zinc-binding.</text>
</comment>
<comment type="similarity">
    <text evidence="8">Belongs to the BEX family.</text>
</comment>
<comment type="caution">
    <text evidence="8">Was named BEX1 by some authors.</text>
</comment>
<comment type="online information" name="Atlas of Genetics and Cytogenetics in Oncology and Haematology">
    <link uri="https://atlasgeneticsoncology.org/gene/44162/BEX2"/>
</comment>
<sequence>MESKEERALNNLIVENVNQENDEKDEKEQVANKGEPLALPLNVSEYCVPRGNRRRFRVRQPILQYRWDIMHRLGEPQARMREENMERIGEEVRQLMEKLREKQLSHSLRAVSTDPPHHDHHDEFCLMP</sequence>
<dbReference type="EMBL" id="AY833560">
    <property type="protein sequence ID" value="AAX40678.1"/>
    <property type="molecule type" value="mRNA"/>
</dbReference>
<dbReference type="EMBL" id="AF251053">
    <property type="protein sequence ID" value="AAK34943.1"/>
    <property type="molecule type" value="mRNA"/>
</dbReference>
<dbReference type="EMBL" id="AK312085">
    <property type="protein sequence ID" value="BAG35021.1"/>
    <property type="molecule type" value="mRNA"/>
</dbReference>
<dbReference type="EMBL" id="AL133348">
    <property type="status" value="NOT_ANNOTATED_CDS"/>
    <property type="molecule type" value="Genomic_DNA"/>
</dbReference>
<dbReference type="EMBL" id="Z70233">
    <property type="protein sequence ID" value="CAD24039.1"/>
    <property type="molecule type" value="Genomic_DNA"/>
</dbReference>
<dbReference type="EMBL" id="CH471190">
    <property type="protein sequence ID" value="EAW54715.1"/>
    <property type="molecule type" value="Genomic_DNA"/>
</dbReference>
<dbReference type="EMBL" id="CH471190">
    <property type="protein sequence ID" value="EAW54716.1"/>
    <property type="molecule type" value="Genomic_DNA"/>
</dbReference>
<dbReference type="EMBL" id="BC015522">
    <property type="protein sequence ID" value="AAH15522.1"/>
    <property type="molecule type" value="mRNA"/>
</dbReference>
<dbReference type="CCDS" id="CCDS14505.1">
    <molecule id="Q9BXY8-1"/>
</dbReference>
<dbReference type="CCDS" id="CCDS55467.1">
    <molecule id="Q9BXY8-2"/>
</dbReference>
<dbReference type="RefSeq" id="NP_001161871.1">
    <molecule id="Q9BXY8-2"/>
    <property type="nucleotide sequence ID" value="NM_001168399.2"/>
</dbReference>
<dbReference type="RefSeq" id="NP_001161872.1">
    <property type="nucleotide sequence ID" value="NM_001168400.1"/>
</dbReference>
<dbReference type="RefSeq" id="NP_001161873.1">
    <molecule id="Q9BXY8-1"/>
    <property type="nucleotide sequence ID" value="NM_001168401.2"/>
</dbReference>
<dbReference type="RefSeq" id="NP_116010.1">
    <molecule id="Q9BXY8-1"/>
    <property type="nucleotide sequence ID" value="NM_032621.4"/>
</dbReference>
<dbReference type="BioGRID" id="124218">
    <property type="interactions" value="109"/>
</dbReference>
<dbReference type="CORUM" id="Q9BXY8"/>
<dbReference type="FunCoup" id="Q9BXY8">
    <property type="interactions" value="380"/>
</dbReference>
<dbReference type="IntAct" id="Q9BXY8">
    <property type="interactions" value="97"/>
</dbReference>
<dbReference type="MINT" id="Q9BXY8"/>
<dbReference type="STRING" id="9606.ENSP00000442521"/>
<dbReference type="iPTMnet" id="Q9BXY8"/>
<dbReference type="PhosphoSitePlus" id="Q9BXY8"/>
<dbReference type="SwissPalm" id="Q9BXY8"/>
<dbReference type="BioMuta" id="BEX2"/>
<dbReference type="DMDM" id="74752443"/>
<dbReference type="MassIVE" id="Q9BXY8"/>
<dbReference type="PaxDb" id="9606-ENSP00000442521"/>
<dbReference type="PeptideAtlas" id="Q9BXY8"/>
<dbReference type="Antibodypedia" id="44280">
    <property type="antibodies" value="92 antibodies from 19 providers"/>
</dbReference>
<dbReference type="DNASU" id="84707"/>
<dbReference type="Ensembl" id="ENST00000372674.5">
    <molecule id="Q9BXY8-1"/>
    <property type="protein sequence ID" value="ENSP00000361759.1"/>
    <property type="gene ID" value="ENSG00000133134.12"/>
</dbReference>
<dbReference type="Ensembl" id="ENST00000372677.8">
    <molecule id="Q9BXY8-1"/>
    <property type="protein sequence ID" value="ENSP00000361762.3"/>
    <property type="gene ID" value="ENSG00000133134.12"/>
</dbReference>
<dbReference type="Ensembl" id="ENST00000536889.1">
    <molecule id="Q9BXY8-2"/>
    <property type="protein sequence ID" value="ENSP00000442521.1"/>
    <property type="gene ID" value="ENSG00000133134.12"/>
</dbReference>
<dbReference type="GeneID" id="84707"/>
<dbReference type="KEGG" id="hsa:84707"/>
<dbReference type="MANE-Select" id="ENST00000372677.8">
    <property type="protein sequence ID" value="ENSP00000361762.3"/>
    <property type="RefSeq nucleotide sequence ID" value="NM_032621.4"/>
    <property type="RefSeq protein sequence ID" value="NP_116010.1"/>
</dbReference>
<dbReference type="UCSC" id="uc004eka.4">
    <molecule id="Q9BXY8-1"/>
    <property type="organism name" value="human"/>
</dbReference>
<dbReference type="AGR" id="HGNC:30933"/>
<dbReference type="CTD" id="84707"/>
<dbReference type="DisGeNET" id="84707"/>
<dbReference type="GeneCards" id="BEX2"/>
<dbReference type="HGNC" id="HGNC:30933">
    <property type="gene designation" value="BEX2"/>
</dbReference>
<dbReference type="HPA" id="ENSG00000133134">
    <property type="expression patterns" value="Tissue enhanced (brain, pituitary gland)"/>
</dbReference>
<dbReference type="MIM" id="300691">
    <property type="type" value="gene"/>
</dbReference>
<dbReference type="neXtProt" id="NX_Q9BXY8"/>
<dbReference type="OpenTargets" id="ENSG00000133134"/>
<dbReference type="PharmGKB" id="PA134977614"/>
<dbReference type="VEuPathDB" id="HostDB:ENSG00000133134"/>
<dbReference type="eggNOG" id="ENOG502RW3Y">
    <property type="taxonomic scope" value="Eukaryota"/>
</dbReference>
<dbReference type="GeneTree" id="ENSGT00940000153412"/>
<dbReference type="HOGENOM" id="CLU_123122_1_0_1"/>
<dbReference type="InParanoid" id="Q9BXY8"/>
<dbReference type="OMA" id="PPYHEHH"/>
<dbReference type="OrthoDB" id="9833968at2759"/>
<dbReference type="PAN-GO" id="Q9BXY8">
    <property type="GO annotations" value="5 GO annotations based on evolutionary models"/>
</dbReference>
<dbReference type="PhylomeDB" id="Q9BXY8"/>
<dbReference type="TreeFam" id="TF337909"/>
<dbReference type="PathwayCommons" id="Q9BXY8"/>
<dbReference type="SignaLink" id="Q9BXY8"/>
<dbReference type="BioGRID-ORCS" id="84707">
    <property type="hits" value="17 hits in 745 CRISPR screens"/>
</dbReference>
<dbReference type="ChiTaRS" id="BEX2">
    <property type="organism name" value="human"/>
</dbReference>
<dbReference type="GeneWiki" id="BEX2"/>
<dbReference type="GenomeRNAi" id="84707"/>
<dbReference type="Pharos" id="Q9BXY8">
    <property type="development level" value="Tbio"/>
</dbReference>
<dbReference type="PRO" id="PR:Q9BXY8"/>
<dbReference type="Proteomes" id="UP000005640">
    <property type="component" value="Chromosome X"/>
</dbReference>
<dbReference type="RNAct" id="Q9BXY8">
    <property type="molecule type" value="protein"/>
</dbReference>
<dbReference type="Bgee" id="ENSG00000133134">
    <property type="expression patterns" value="Expressed in endothelial cell and 184 other cell types or tissues"/>
</dbReference>
<dbReference type="ExpressionAtlas" id="Q9BXY8">
    <property type="expression patterns" value="baseline and differential"/>
</dbReference>
<dbReference type="GO" id="GO:0005737">
    <property type="term" value="C:cytoplasm"/>
    <property type="evidence" value="ECO:0000318"/>
    <property type="project" value="GO_Central"/>
</dbReference>
<dbReference type="GO" id="GO:0005634">
    <property type="term" value="C:nucleus"/>
    <property type="evidence" value="ECO:0000318"/>
    <property type="project" value="GO_Central"/>
</dbReference>
<dbReference type="GO" id="GO:0046872">
    <property type="term" value="F:metal ion binding"/>
    <property type="evidence" value="ECO:0007669"/>
    <property type="project" value="UniProtKB-KW"/>
</dbReference>
<dbReference type="GO" id="GO:0140678">
    <property type="term" value="F:molecular function inhibitor activity"/>
    <property type="evidence" value="ECO:0000250"/>
    <property type="project" value="UniProtKB"/>
</dbReference>
<dbReference type="GO" id="GO:0005102">
    <property type="term" value="F:signaling receptor binding"/>
    <property type="evidence" value="ECO:0000318"/>
    <property type="project" value="GO_Central"/>
</dbReference>
<dbReference type="GO" id="GO:0006915">
    <property type="term" value="P:apoptotic process"/>
    <property type="evidence" value="ECO:0007669"/>
    <property type="project" value="UniProtKB-KW"/>
</dbReference>
<dbReference type="GO" id="GO:0031397">
    <property type="term" value="P:negative regulation of protein ubiquitination"/>
    <property type="evidence" value="ECO:0000250"/>
    <property type="project" value="UniProtKB"/>
</dbReference>
<dbReference type="GO" id="GO:0042981">
    <property type="term" value="P:regulation of apoptotic process"/>
    <property type="evidence" value="ECO:0000314"/>
    <property type="project" value="UniProtKB"/>
</dbReference>
<dbReference type="GO" id="GO:0051726">
    <property type="term" value="P:regulation of cell cycle"/>
    <property type="evidence" value="ECO:0000314"/>
    <property type="project" value="UniProtKB"/>
</dbReference>
<dbReference type="GO" id="GO:0007165">
    <property type="term" value="P:signal transduction"/>
    <property type="evidence" value="ECO:0000318"/>
    <property type="project" value="GO_Central"/>
</dbReference>
<dbReference type="InterPro" id="IPR007623">
    <property type="entry name" value="BEX"/>
</dbReference>
<dbReference type="InterPro" id="IPR021156">
    <property type="entry name" value="TF_A-like/BEX"/>
</dbReference>
<dbReference type="PANTHER" id="PTHR19430">
    <property type="entry name" value="PROTEIN BEX1-RELATED"/>
    <property type="match status" value="1"/>
</dbReference>
<dbReference type="PANTHER" id="PTHR19430:SF2">
    <property type="entry name" value="PROTEIN BEX2"/>
    <property type="match status" value="1"/>
</dbReference>
<dbReference type="Pfam" id="PF04538">
    <property type="entry name" value="BEX"/>
    <property type="match status" value="1"/>
</dbReference>
<dbReference type="PIRSF" id="PIRSF008633">
    <property type="entry name" value="BEX"/>
    <property type="match status" value="1"/>
</dbReference>
<evidence type="ECO:0000250" key="1">
    <source>
        <dbReference type="UniProtKB" id="Q3MKQ1"/>
    </source>
</evidence>
<evidence type="ECO:0000250" key="2">
    <source>
        <dbReference type="UniProtKB" id="Q9WTZ8"/>
    </source>
</evidence>
<evidence type="ECO:0000250" key="3">
    <source>
        <dbReference type="UniProtKB" id="Q9WTZ9"/>
    </source>
</evidence>
<evidence type="ECO:0000256" key="4">
    <source>
        <dbReference type="SAM" id="MobiDB-lite"/>
    </source>
</evidence>
<evidence type="ECO:0000269" key="5">
    <source>
    </source>
</evidence>
<evidence type="ECO:0000269" key="6">
    <source>
    </source>
</evidence>
<evidence type="ECO:0000269" key="7">
    <source>
    </source>
</evidence>
<evidence type="ECO:0000305" key="8"/>
<organism>
    <name type="scientific">Homo sapiens</name>
    <name type="common">Human</name>
    <dbReference type="NCBI Taxonomy" id="9606"/>
    <lineage>
        <taxon>Eukaryota</taxon>
        <taxon>Metazoa</taxon>
        <taxon>Chordata</taxon>
        <taxon>Craniata</taxon>
        <taxon>Vertebrata</taxon>
        <taxon>Euteleostomi</taxon>
        <taxon>Mammalia</taxon>
        <taxon>Eutheria</taxon>
        <taxon>Euarchontoglires</taxon>
        <taxon>Primates</taxon>
        <taxon>Haplorrhini</taxon>
        <taxon>Catarrhini</taxon>
        <taxon>Hominidae</taxon>
        <taxon>Homo</taxon>
    </lineage>
</organism>
<protein>
    <recommendedName>
        <fullName>Protein BEX2</fullName>
    </recommendedName>
    <alternativeName>
        <fullName>Brain-expressed X-linked protein 2</fullName>
        <shortName>hBex2</shortName>
    </alternativeName>
</protein>
<keyword id="KW-0025">Alternative splicing</keyword>
<keyword id="KW-0053">Apoptosis</keyword>
<keyword id="KW-0131">Cell cycle</keyword>
<keyword id="KW-0963">Cytoplasm</keyword>
<keyword id="KW-0479">Metal-binding</keyword>
<keyword id="KW-0488">Methylation</keyword>
<keyword id="KW-0539">Nucleus</keyword>
<keyword id="KW-1267">Proteomics identification</keyword>
<keyword id="KW-1185">Reference proteome</keyword>
<keyword id="KW-0862">Zinc</keyword>
<name>BEX2_HUMAN</name>
<feature type="chain" id="PRO_0000229777" description="Protein BEX2">
    <location>
        <begin position="1"/>
        <end position="128"/>
    </location>
</feature>
<feature type="region of interest" description="Disordered" evidence="4">
    <location>
        <begin position="107"/>
        <end position="128"/>
    </location>
</feature>
<feature type="region of interest" description="His cluster" evidence="3">
    <location>
        <begin position="117"/>
        <end position="121"/>
    </location>
</feature>
<feature type="compositionally biased region" description="Basic and acidic residues" evidence="4">
    <location>
        <begin position="115"/>
        <end position="128"/>
    </location>
</feature>
<feature type="binding site" evidence="3">
    <location>
        <position position="125"/>
    </location>
    <ligand>
        <name>Zn(2+)</name>
        <dbReference type="ChEBI" id="CHEBI:29105"/>
        <note>ligand shared with FEM1B</note>
    </ligand>
</feature>
<feature type="modified residue" description="Omega-N-methylarginine" evidence="2">
    <location>
        <position position="50"/>
    </location>
</feature>
<feature type="splice variant" id="VSP_046808" description="In isoform 2." evidence="8">
    <original>M</original>
    <variation>MQKMVVCGAKCCGDAPHVENREEETARIGPGVM</variation>
    <location>
        <position position="1"/>
    </location>
</feature>
<gene>
    <name type="primary">BEX2</name>
</gene>